<evidence type="ECO:0000250" key="1"/>
<evidence type="ECO:0000255" key="2">
    <source>
        <dbReference type="HAMAP-Rule" id="MF_01109"/>
    </source>
</evidence>
<dbReference type="EC" id="2.1.3.3" evidence="2"/>
<dbReference type="EMBL" id="AF534569">
    <property type="protein sequence ID" value="AAN65256.1"/>
    <property type="molecule type" value="Genomic_DNA"/>
</dbReference>
<dbReference type="EMBL" id="CP000725">
    <property type="protein sequence ID" value="ABV10699.1"/>
    <property type="molecule type" value="Genomic_DNA"/>
</dbReference>
<dbReference type="SMR" id="Q8GND4"/>
<dbReference type="STRING" id="467705.SGO_1592"/>
<dbReference type="KEGG" id="sgo:SGO_1592"/>
<dbReference type="eggNOG" id="COG0078">
    <property type="taxonomic scope" value="Bacteria"/>
</dbReference>
<dbReference type="HOGENOM" id="CLU_043846_3_1_9"/>
<dbReference type="UniPathway" id="UPA00254">
    <property type="reaction ID" value="UER00365"/>
</dbReference>
<dbReference type="Proteomes" id="UP000001131">
    <property type="component" value="Chromosome"/>
</dbReference>
<dbReference type="GO" id="GO:0005737">
    <property type="term" value="C:cytoplasm"/>
    <property type="evidence" value="ECO:0007669"/>
    <property type="project" value="UniProtKB-SubCell"/>
</dbReference>
<dbReference type="GO" id="GO:0016597">
    <property type="term" value="F:amino acid binding"/>
    <property type="evidence" value="ECO:0007669"/>
    <property type="project" value="InterPro"/>
</dbReference>
<dbReference type="GO" id="GO:0004585">
    <property type="term" value="F:ornithine carbamoyltransferase activity"/>
    <property type="evidence" value="ECO:0007669"/>
    <property type="project" value="UniProtKB-UniRule"/>
</dbReference>
<dbReference type="GO" id="GO:0042450">
    <property type="term" value="P:arginine biosynthetic process via ornithine"/>
    <property type="evidence" value="ECO:0007669"/>
    <property type="project" value="TreeGrafter"/>
</dbReference>
<dbReference type="GO" id="GO:0019547">
    <property type="term" value="P:arginine catabolic process to ornithine"/>
    <property type="evidence" value="ECO:0007669"/>
    <property type="project" value="UniProtKB-UniPathway"/>
</dbReference>
<dbReference type="GO" id="GO:0019240">
    <property type="term" value="P:citrulline biosynthetic process"/>
    <property type="evidence" value="ECO:0007669"/>
    <property type="project" value="TreeGrafter"/>
</dbReference>
<dbReference type="GO" id="GO:0006526">
    <property type="term" value="P:L-arginine biosynthetic process"/>
    <property type="evidence" value="ECO:0007669"/>
    <property type="project" value="UniProtKB-UniRule"/>
</dbReference>
<dbReference type="FunFam" id="3.40.50.1370:FF:000004">
    <property type="entry name" value="Ornithine carbamoyltransferase"/>
    <property type="match status" value="1"/>
</dbReference>
<dbReference type="Gene3D" id="3.40.50.1370">
    <property type="entry name" value="Aspartate/ornithine carbamoyltransferase"/>
    <property type="match status" value="2"/>
</dbReference>
<dbReference type="HAMAP" id="MF_01109">
    <property type="entry name" value="OTCase"/>
    <property type="match status" value="1"/>
</dbReference>
<dbReference type="InterPro" id="IPR006132">
    <property type="entry name" value="Asp/Orn_carbamoyltranf_P-bd"/>
</dbReference>
<dbReference type="InterPro" id="IPR006130">
    <property type="entry name" value="Asp/Orn_carbamoylTrfase"/>
</dbReference>
<dbReference type="InterPro" id="IPR036901">
    <property type="entry name" value="Asp/Orn_carbamoylTrfase_sf"/>
</dbReference>
<dbReference type="InterPro" id="IPR006131">
    <property type="entry name" value="Asp_carbamoyltransf_Asp/Orn-bd"/>
</dbReference>
<dbReference type="InterPro" id="IPR002292">
    <property type="entry name" value="Orn/put_carbamltrans"/>
</dbReference>
<dbReference type="InterPro" id="IPR024904">
    <property type="entry name" value="OTCase_ArgI"/>
</dbReference>
<dbReference type="NCBIfam" id="TIGR00658">
    <property type="entry name" value="orni_carb_tr"/>
    <property type="match status" value="1"/>
</dbReference>
<dbReference type="NCBIfam" id="NF001986">
    <property type="entry name" value="PRK00779.1"/>
    <property type="match status" value="1"/>
</dbReference>
<dbReference type="PANTHER" id="PTHR45753:SF1">
    <property type="entry name" value="ORNITHINE CARBAMOYLTRANSFERASE, CATABOLIC"/>
    <property type="match status" value="1"/>
</dbReference>
<dbReference type="PANTHER" id="PTHR45753">
    <property type="entry name" value="ORNITHINE CARBAMOYLTRANSFERASE, MITOCHONDRIAL"/>
    <property type="match status" value="1"/>
</dbReference>
<dbReference type="Pfam" id="PF00185">
    <property type="entry name" value="OTCace"/>
    <property type="match status" value="1"/>
</dbReference>
<dbReference type="Pfam" id="PF02729">
    <property type="entry name" value="OTCace_N"/>
    <property type="match status" value="1"/>
</dbReference>
<dbReference type="PRINTS" id="PR00100">
    <property type="entry name" value="AOTCASE"/>
</dbReference>
<dbReference type="PRINTS" id="PR00102">
    <property type="entry name" value="OTCASE"/>
</dbReference>
<dbReference type="SUPFAM" id="SSF53671">
    <property type="entry name" value="Aspartate/ornithine carbamoyltransferase"/>
    <property type="match status" value="1"/>
</dbReference>
<dbReference type="PROSITE" id="PS00097">
    <property type="entry name" value="CARBAMOYLTRANSFERASE"/>
    <property type="match status" value="1"/>
</dbReference>
<organism>
    <name type="scientific">Streptococcus gordonii (strain Challis / ATCC 35105 / BCRC 15272 / CH1 / DL1 / V288)</name>
    <dbReference type="NCBI Taxonomy" id="467705"/>
    <lineage>
        <taxon>Bacteria</taxon>
        <taxon>Bacillati</taxon>
        <taxon>Bacillota</taxon>
        <taxon>Bacilli</taxon>
        <taxon>Lactobacillales</taxon>
        <taxon>Streptococcaceae</taxon>
        <taxon>Streptococcus</taxon>
    </lineage>
</organism>
<feature type="chain" id="PRO_0000113032" description="Ornithine carbamoyltransferase, catabolic">
    <location>
        <begin position="1"/>
        <end position="338"/>
    </location>
</feature>
<feature type="binding site" evidence="2">
    <location>
        <begin position="58"/>
        <end position="61"/>
    </location>
    <ligand>
        <name>carbamoyl phosphate</name>
        <dbReference type="ChEBI" id="CHEBI:58228"/>
    </ligand>
</feature>
<feature type="binding site" evidence="2">
    <location>
        <position position="85"/>
    </location>
    <ligand>
        <name>carbamoyl phosphate</name>
        <dbReference type="ChEBI" id="CHEBI:58228"/>
    </ligand>
</feature>
<feature type="binding site" evidence="2">
    <location>
        <position position="109"/>
    </location>
    <ligand>
        <name>carbamoyl phosphate</name>
        <dbReference type="ChEBI" id="CHEBI:58228"/>
    </ligand>
</feature>
<feature type="binding site" evidence="2">
    <location>
        <begin position="136"/>
        <end position="139"/>
    </location>
    <ligand>
        <name>carbamoyl phosphate</name>
        <dbReference type="ChEBI" id="CHEBI:58228"/>
    </ligand>
</feature>
<feature type="binding site" evidence="2">
    <location>
        <position position="168"/>
    </location>
    <ligand>
        <name>L-ornithine</name>
        <dbReference type="ChEBI" id="CHEBI:46911"/>
    </ligand>
</feature>
<feature type="binding site" evidence="2">
    <location>
        <position position="232"/>
    </location>
    <ligand>
        <name>L-ornithine</name>
        <dbReference type="ChEBI" id="CHEBI:46911"/>
    </ligand>
</feature>
<feature type="binding site" evidence="2">
    <location>
        <begin position="236"/>
        <end position="237"/>
    </location>
    <ligand>
        <name>L-ornithine</name>
        <dbReference type="ChEBI" id="CHEBI:46911"/>
    </ligand>
</feature>
<feature type="binding site" evidence="2">
    <location>
        <begin position="273"/>
        <end position="274"/>
    </location>
    <ligand>
        <name>carbamoyl phosphate</name>
        <dbReference type="ChEBI" id="CHEBI:58228"/>
    </ligand>
</feature>
<feature type="binding site" evidence="2">
    <location>
        <position position="318"/>
    </location>
    <ligand>
        <name>carbamoyl phosphate</name>
        <dbReference type="ChEBI" id="CHEBI:58228"/>
    </ligand>
</feature>
<gene>
    <name evidence="2" type="primary">arcB</name>
    <name type="ordered locus">SGO_1592</name>
</gene>
<protein>
    <recommendedName>
        <fullName evidence="2">Ornithine carbamoyltransferase, catabolic</fullName>
        <shortName evidence="2">OTCase</shortName>
        <ecNumber evidence="2">2.1.3.3</ecNumber>
    </recommendedName>
</protein>
<proteinExistence type="inferred from homology"/>
<reference key="1">
    <citation type="journal article" date="2002" name="Appl. Environ. Microbiol.">
        <title>Isolation and molecular analysis of the gene cluster for the arginine deiminase system from Streptococcus gordonii DL1.</title>
        <authorList>
            <person name="Dong Y."/>
            <person name="Chen Y.-Y.M."/>
            <person name="Snyder J.A."/>
            <person name="Burne R.A."/>
        </authorList>
    </citation>
    <scope>NUCLEOTIDE SEQUENCE [GENOMIC DNA]</scope>
</reference>
<reference key="2">
    <citation type="journal article" date="2007" name="J. Bacteriol.">
        <title>Genome-wide transcriptional changes in Streptococcus gordonii in response to competence signaling peptide.</title>
        <authorList>
            <person name="Vickerman M.M."/>
            <person name="Iobst S."/>
            <person name="Jesionowski A.M."/>
            <person name="Gill S.R."/>
        </authorList>
    </citation>
    <scope>NUCLEOTIDE SEQUENCE [LARGE SCALE GENOMIC DNA]</scope>
    <source>
        <strain>Challis / ATCC 35105 / BCRC 15272 / CH1 / DL1 / V288</strain>
    </source>
</reference>
<name>OTCC_STRGC</name>
<sequence>MTNSVFQGRSFLAEKDFTRAELEYLIGLSAHLKDLKKRNIEHRYLAGKNIALLFEKTSTRTRAAFTTAAIDLGAHPEYLGANDIQLGKKESTEDTAKVLGRMFDGIEFRGFSQRMVEELAEFSGVPVWNGLTDEWHPTQMLADYLTVQENFGRLEGLTLVYCGDGRNNVANSLLVTGAILGVNVHIFSPKELFPEQEIVELAEGFAKESGAHILITEDADEAVKGADVLYTDVWVSMGEEDKFAERVALLKPYQVNMDLVKKADNEDLIFLHCLPAFHDTNTVYGKDVAEKFGVEEMEVTDEVFRSKYARHFDQAENRMHTIKAVMAATLGNLYIPKV</sequence>
<keyword id="KW-0056">Arginine metabolism</keyword>
<keyword id="KW-0963">Cytoplasm</keyword>
<keyword id="KW-1185">Reference proteome</keyword>
<keyword id="KW-0808">Transferase</keyword>
<accession>Q8GND4</accession>
<accession>A8AYL0</accession>
<comment type="function">
    <text evidence="1">Reversibly catalyzes the transfer of the carbamoyl group from carbamoyl phosphate (CP) to the N(epsilon) atom of ornithine (ORN) to produce L-citrulline.</text>
</comment>
<comment type="catalytic activity">
    <reaction evidence="2">
        <text>carbamoyl phosphate + L-ornithine = L-citrulline + phosphate + H(+)</text>
        <dbReference type="Rhea" id="RHEA:19513"/>
        <dbReference type="ChEBI" id="CHEBI:15378"/>
        <dbReference type="ChEBI" id="CHEBI:43474"/>
        <dbReference type="ChEBI" id="CHEBI:46911"/>
        <dbReference type="ChEBI" id="CHEBI:57743"/>
        <dbReference type="ChEBI" id="CHEBI:58228"/>
        <dbReference type="EC" id="2.1.3.3"/>
    </reaction>
</comment>
<comment type="pathway">
    <text evidence="2">Amino-acid degradation; L-arginine degradation via ADI pathway; carbamoyl phosphate from L-arginine: step 2/2.</text>
</comment>
<comment type="subcellular location">
    <subcellularLocation>
        <location evidence="2">Cytoplasm</location>
    </subcellularLocation>
</comment>
<comment type="similarity">
    <text evidence="2">Belongs to the aspartate/ornithine carbamoyltransferase superfamily. OTCase family.</text>
</comment>